<evidence type="ECO:0000255" key="1">
    <source>
        <dbReference type="HAMAP-Rule" id="MF_00383"/>
    </source>
</evidence>
<proteinExistence type="inferred from homology"/>
<protein>
    <recommendedName>
        <fullName evidence="1">Transcription initiation factor IIB</fullName>
        <shortName evidence="1">TFIIB</shortName>
    </recommendedName>
</protein>
<comment type="function">
    <text evidence="1">Stabilizes TBP binding to an archaeal box-A promoter. Also responsible for recruiting RNA polymerase II to the pre-initiation complex (DNA-TBP-TFIIB).</text>
</comment>
<comment type="similarity">
    <text evidence="1">Belongs to the TFIIB family.</text>
</comment>
<organism>
    <name type="scientific">Aeropyrum pernix (strain ATCC 700893 / DSM 11879 / JCM 9820 / NBRC 100138 / K1)</name>
    <dbReference type="NCBI Taxonomy" id="272557"/>
    <lineage>
        <taxon>Archaea</taxon>
        <taxon>Thermoproteota</taxon>
        <taxon>Thermoprotei</taxon>
        <taxon>Desulfurococcales</taxon>
        <taxon>Desulfurococcaceae</taxon>
        <taxon>Aeropyrum</taxon>
    </lineage>
</organism>
<name>TF2B_AERPE</name>
<dbReference type="EMBL" id="BA000002">
    <property type="protein sequence ID" value="BAA81458.2"/>
    <property type="molecule type" value="Genomic_DNA"/>
</dbReference>
<dbReference type="PIR" id="B72475">
    <property type="entry name" value="B72475"/>
</dbReference>
<dbReference type="RefSeq" id="WP_010867009.1">
    <property type="nucleotide sequence ID" value="NC_000854.2"/>
</dbReference>
<dbReference type="SMR" id="Q9Y942"/>
<dbReference type="STRING" id="272557.APE_2443.1"/>
<dbReference type="EnsemblBacteria" id="BAA81458">
    <property type="protein sequence ID" value="BAA81458"/>
    <property type="gene ID" value="APE_2443.1"/>
</dbReference>
<dbReference type="GeneID" id="1445422"/>
<dbReference type="KEGG" id="ape:APE_2443.1"/>
<dbReference type="PATRIC" id="fig|272557.25.peg.1622"/>
<dbReference type="eggNOG" id="arCOG01981">
    <property type="taxonomic scope" value="Archaea"/>
</dbReference>
<dbReference type="Proteomes" id="UP000002518">
    <property type="component" value="Chromosome"/>
</dbReference>
<dbReference type="GO" id="GO:0097550">
    <property type="term" value="C:transcription preinitiation complex"/>
    <property type="evidence" value="ECO:0007669"/>
    <property type="project" value="TreeGrafter"/>
</dbReference>
<dbReference type="GO" id="GO:0003700">
    <property type="term" value="F:DNA-binding transcription factor activity"/>
    <property type="evidence" value="ECO:0007669"/>
    <property type="project" value="UniProtKB-UniRule"/>
</dbReference>
<dbReference type="GO" id="GO:0017025">
    <property type="term" value="F:TBP-class protein binding"/>
    <property type="evidence" value="ECO:0007669"/>
    <property type="project" value="InterPro"/>
</dbReference>
<dbReference type="GO" id="GO:0070897">
    <property type="term" value="P:transcription preinitiation complex assembly"/>
    <property type="evidence" value="ECO:0007669"/>
    <property type="project" value="InterPro"/>
</dbReference>
<dbReference type="CDD" id="cd20549">
    <property type="entry name" value="CYCLIN_TFIIB_archaea_like_rpt1"/>
    <property type="match status" value="1"/>
</dbReference>
<dbReference type="CDD" id="cd20550">
    <property type="entry name" value="CYCLIN_TFIIB_archaea_like_rpt2"/>
    <property type="match status" value="1"/>
</dbReference>
<dbReference type="FunFam" id="1.10.472.10:FF:000023">
    <property type="entry name" value="Transcription initiation factor IIB"/>
    <property type="match status" value="1"/>
</dbReference>
<dbReference type="Gene3D" id="1.10.472.170">
    <property type="match status" value="1"/>
</dbReference>
<dbReference type="Gene3D" id="1.10.472.10">
    <property type="entry name" value="Cyclin-like"/>
    <property type="match status" value="1"/>
</dbReference>
<dbReference type="HAMAP" id="MF_00383">
    <property type="entry name" value="TF2B_arch"/>
    <property type="match status" value="1"/>
</dbReference>
<dbReference type="InterPro" id="IPR013763">
    <property type="entry name" value="Cyclin-like_dom"/>
</dbReference>
<dbReference type="InterPro" id="IPR036915">
    <property type="entry name" value="Cyclin-like_sf"/>
</dbReference>
<dbReference type="InterPro" id="IPR000812">
    <property type="entry name" value="TFIIB"/>
</dbReference>
<dbReference type="InterPro" id="IPR023484">
    <property type="entry name" value="TFIIB_arc"/>
</dbReference>
<dbReference type="InterPro" id="IPR023486">
    <property type="entry name" value="TFIIB_CS"/>
</dbReference>
<dbReference type="InterPro" id="IPR013150">
    <property type="entry name" value="TFIIB_cyclin"/>
</dbReference>
<dbReference type="PANTHER" id="PTHR11618:SF13">
    <property type="entry name" value="TRANSCRIPTION INITIATION FACTOR IIB"/>
    <property type="match status" value="1"/>
</dbReference>
<dbReference type="PANTHER" id="PTHR11618">
    <property type="entry name" value="TRANSCRIPTION INITIATION FACTOR IIB-RELATED"/>
    <property type="match status" value="1"/>
</dbReference>
<dbReference type="Pfam" id="PF00382">
    <property type="entry name" value="TFIIB"/>
    <property type="match status" value="2"/>
</dbReference>
<dbReference type="PRINTS" id="PR00685">
    <property type="entry name" value="TIFACTORIIB"/>
</dbReference>
<dbReference type="SMART" id="SM00385">
    <property type="entry name" value="CYCLIN"/>
    <property type="match status" value="2"/>
</dbReference>
<dbReference type="SUPFAM" id="SSF47954">
    <property type="entry name" value="Cyclin-like"/>
    <property type="match status" value="2"/>
</dbReference>
<dbReference type="PROSITE" id="PS00782">
    <property type="entry name" value="TFIIB"/>
    <property type="match status" value="2"/>
</dbReference>
<accession>Q9Y942</accession>
<reference key="1">
    <citation type="journal article" date="1999" name="DNA Res.">
        <title>Complete genome sequence of an aerobic hyper-thermophilic crenarchaeon, Aeropyrum pernix K1.</title>
        <authorList>
            <person name="Kawarabayasi Y."/>
            <person name="Hino Y."/>
            <person name="Horikawa H."/>
            <person name="Yamazaki S."/>
            <person name="Haikawa Y."/>
            <person name="Jin-no K."/>
            <person name="Takahashi M."/>
            <person name="Sekine M."/>
            <person name="Baba S."/>
            <person name="Ankai A."/>
            <person name="Kosugi H."/>
            <person name="Hosoyama A."/>
            <person name="Fukui S."/>
            <person name="Nagai Y."/>
            <person name="Nishijima K."/>
            <person name="Nakazawa H."/>
            <person name="Takamiya M."/>
            <person name="Masuda S."/>
            <person name="Funahashi T."/>
            <person name="Tanaka T."/>
            <person name="Kudoh Y."/>
            <person name="Yamazaki J."/>
            <person name="Kushida N."/>
            <person name="Oguchi A."/>
            <person name="Aoki K."/>
            <person name="Kubota K."/>
            <person name="Nakamura Y."/>
            <person name="Nomura N."/>
            <person name="Sako Y."/>
            <person name="Kikuchi H."/>
        </authorList>
    </citation>
    <scope>NUCLEOTIDE SEQUENCE [LARGE SCALE GENOMIC DNA]</scope>
    <source>
        <strain>ATCC 700893 / DSM 11879 / JCM 9820 / NBRC 100138 / K1</strain>
    </source>
</reference>
<sequence length="322" mass="35377">MASEIPYDESPSGEESGEIKCKNIVTDPVRGLKICADTGEIIGEDIIGTESDVKAYTPEERQQKTHYGGPLKYSHHYMGVEASLEHPRDHGPKGIKQRKILPRRPPRLSARPLTSVDKNLQTALSLINEVASRMGMPEIVVEDASKIYREAMEKGLTRGRSIESIVAASLYAASRIHGLPHSLTDIIKAMKGNVDAETRRDVARSYRLLVRDLNIKIPVRKPENFVYTIISALGLPEHVAIEAIKIIDLSRKKGLTAGKDPGGLAGAAVYLAALKHGIRKTQKEIAHVVGVTEVTIRNRYKEIAQALGIEEELEEKGGEEKG</sequence>
<feature type="chain" id="PRO_0000119309" description="Transcription initiation factor IIB">
    <location>
        <begin position="1"/>
        <end position="322"/>
    </location>
</feature>
<feature type="repeat" description="1">
    <location>
        <begin position="125"/>
        <end position="213"/>
    </location>
</feature>
<feature type="repeat" description="2">
    <location>
        <begin position="224"/>
        <end position="305"/>
    </location>
</feature>
<gene>
    <name evidence="1" type="primary">tfb</name>
    <name type="ordered locus">APE_2443.1</name>
</gene>
<keyword id="KW-1185">Reference proteome</keyword>
<keyword id="KW-0677">Repeat</keyword>
<keyword id="KW-0804">Transcription</keyword>
<keyword id="KW-0805">Transcription regulation</keyword>